<keyword id="KW-0687">Ribonucleoprotein</keyword>
<keyword id="KW-0689">Ribosomal protein</keyword>
<comment type="similarity">
    <text evidence="1">Belongs to the universal ribosomal protein uS2 family.</text>
</comment>
<protein>
    <recommendedName>
        <fullName evidence="1">Small ribosomal subunit protein uS2</fullName>
    </recommendedName>
    <alternativeName>
        <fullName evidence="2">30S ribosomal protein S2</fullName>
    </alternativeName>
</protein>
<dbReference type="EMBL" id="CP000444">
    <property type="protein sequence ID" value="ABI43693.1"/>
    <property type="molecule type" value="Genomic_DNA"/>
</dbReference>
<dbReference type="SMR" id="Q0HT62"/>
<dbReference type="KEGG" id="shm:Shewmr7_2708"/>
<dbReference type="HOGENOM" id="CLU_040318_1_2_6"/>
<dbReference type="GO" id="GO:0022627">
    <property type="term" value="C:cytosolic small ribosomal subunit"/>
    <property type="evidence" value="ECO:0007669"/>
    <property type="project" value="TreeGrafter"/>
</dbReference>
<dbReference type="GO" id="GO:0003735">
    <property type="term" value="F:structural constituent of ribosome"/>
    <property type="evidence" value="ECO:0007669"/>
    <property type="project" value="InterPro"/>
</dbReference>
<dbReference type="GO" id="GO:0006412">
    <property type="term" value="P:translation"/>
    <property type="evidence" value="ECO:0007669"/>
    <property type="project" value="UniProtKB-UniRule"/>
</dbReference>
<dbReference type="CDD" id="cd01425">
    <property type="entry name" value="RPS2"/>
    <property type="match status" value="1"/>
</dbReference>
<dbReference type="FunFam" id="1.10.287.610:FF:000001">
    <property type="entry name" value="30S ribosomal protein S2"/>
    <property type="match status" value="1"/>
</dbReference>
<dbReference type="Gene3D" id="3.40.50.10490">
    <property type="entry name" value="Glucose-6-phosphate isomerase like protein, domain 1"/>
    <property type="match status" value="1"/>
</dbReference>
<dbReference type="Gene3D" id="1.10.287.610">
    <property type="entry name" value="Helix hairpin bin"/>
    <property type="match status" value="1"/>
</dbReference>
<dbReference type="HAMAP" id="MF_00291_B">
    <property type="entry name" value="Ribosomal_uS2_B"/>
    <property type="match status" value="1"/>
</dbReference>
<dbReference type="InterPro" id="IPR001865">
    <property type="entry name" value="Ribosomal_uS2"/>
</dbReference>
<dbReference type="InterPro" id="IPR005706">
    <property type="entry name" value="Ribosomal_uS2_bac/mit/plastid"/>
</dbReference>
<dbReference type="InterPro" id="IPR018130">
    <property type="entry name" value="Ribosomal_uS2_CS"/>
</dbReference>
<dbReference type="InterPro" id="IPR023591">
    <property type="entry name" value="Ribosomal_uS2_flav_dom_sf"/>
</dbReference>
<dbReference type="NCBIfam" id="TIGR01011">
    <property type="entry name" value="rpsB_bact"/>
    <property type="match status" value="1"/>
</dbReference>
<dbReference type="PANTHER" id="PTHR12534">
    <property type="entry name" value="30S RIBOSOMAL PROTEIN S2 PROKARYOTIC AND ORGANELLAR"/>
    <property type="match status" value="1"/>
</dbReference>
<dbReference type="PANTHER" id="PTHR12534:SF0">
    <property type="entry name" value="SMALL RIBOSOMAL SUBUNIT PROTEIN US2M"/>
    <property type="match status" value="1"/>
</dbReference>
<dbReference type="Pfam" id="PF00318">
    <property type="entry name" value="Ribosomal_S2"/>
    <property type="match status" value="1"/>
</dbReference>
<dbReference type="PRINTS" id="PR00395">
    <property type="entry name" value="RIBOSOMALS2"/>
</dbReference>
<dbReference type="SUPFAM" id="SSF52313">
    <property type="entry name" value="Ribosomal protein S2"/>
    <property type="match status" value="1"/>
</dbReference>
<dbReference type="PROSITE" id="PS00962">
    <property type="entry name" value="RIBOSOMAL_S2_1"/>
    <property type="match status" value="1"/>
</dbReference>
<dbReference type="PROSITE" id="PS00963">
    <property type="entry name" value="RIBOSOMAL_S2_2"/>
    <property type="match status" value="1"/>
</dbReference>
<organism>
    <name type="scientific">Shewanella sp. (strain MR-7)</name>
    <dbReference type="NCBI Taxonomy" id="60481"/>
    <lineage>
        <taxon>Bacteria</taxon>
        <taxon>Pseudomonadati</taxon>
        <taxon>Pseudomonadota</taxon>
        <taxon>Gammaproteobacteria</taxon>
        <taxon>Alteromonadales</taxon>
        <taxon>Shewanellaceae</taxon>
        <taxon>Shewanella</taxon>
    </lineage>
</organism>
<accession>Q0HT62</accession>
<feature type="chain" id="PRO_1000004069" description="Small ribosomal subunit protein uS2">
    <location>
        <begin position="1"/>
        <end position="242"/>
    </location>
</feature>
<sequence>MTTVSMRDMLQAGVHFGHQTRYWNPKMKPFIFGARNGVHIINLEHTVPMFNEALAFISNVASKKGKVLFVGTKRAAGEAIKEAAISCDQYYVDHRWLGGMLTNWKTVRQSIKRLKELESQSVDGTFDKLTKKEALMRTRELEKLEKSLGGIKNMGGLPDVLFVIGADHEHIAIKEANNLGIPVVAVVDTNSAPDGVNYIVPGNDDAMRAIRLYTTSVAAAANAGRGQDLAVQAEQDGFVEAE</sequence>
<proteinExistence type="inferred from homology"/>
<gene>
    <name evidence="1" type="primary">rpsB</name>
    <name type="ordered locus">Shewmr7_2708</name>
</gene>
<name>RS2_SHESR</name>
<reference key="1">
    <citation type="submission" date="2006-08" db="EMBL/GenBank/DDBJ databases">
        <title>Complete sequence of chromosome 1 of Shewanella sp. MR-7.</title>
        <authorList>
            <person name="Copeland A."/>
            <person name="Lucas S."/>
            <person name="Lapidus A."/>
            <person name="Barry K."/>
            <person name="Detter J.C."/>
            <person name="Glavina del Rio T."/>
            <person name="Hammon N."/>
            <person name="Israni S."/>
            <person name="Dalin E."/>
            <person name="Tice H."/>
            <person name="Pitluck S."/>
            <person name="Kiss H."/>
            <person name="Brettin T."/>
            <person name="Bruce D."/>
            <person name="Han C."/>
            <person name="Tapia R."/>
            <person name="Gilna P."/>
            <person name="Schmutz J."/>
            <person name="Larimer F."/>
            <person name="Land M."/>
            <person name="Hauser L."/>
            <person name="Kyrpides N."/>
            <person name="Mikhailova N."/>
            <person name="Nealson K."/>
            <person name="Konstantinidis K."/>
            <person name="Klappenbach J."/>
            <person name="Tiedje J."/>
            <person name="Richardson P."/>
        </authorList>
    </citation>
    <scope>NUCLEOTIDE SEQUENCE [LARGE SCALE GENOMIC DNA]</scope>
    <source>
        <strain>MR-7</strain>
    </source>
</reference>
<evidence type="ECO:0000255" key="1">
    <source>
        <dbReference type="HAMAP-Rule" id="MF_00291"/>
    </source>
</evidence>
<evidence type="ECO:0000305" key="2"/>